<proteinExistence type="inferred from homology"/>
<evidence type="ECO:0000255" key="1">
    <source>
        <dbReference type="HAMAP-Rule" id="MF_00444"/>
    </source>
</evidence>
<feature type="chain" id="PRO_0000252819" description="ATP-dependent Clp protease proteolytic subunit 2">
    <location>
        <begin position="1"/>
        <end position="218"/>
    </location>
</feature>
<protein>
    <recommendedName>
        <fullName evidence="1">ATP-dependent Clp protease proteolytic subunit 2</fullName>
        <ecNumber evidence="1">3.4.21.92</ecNumber>
    </recommendedName>
    <alternativeName>
        <fullName evidence="1">Endopeptidase Clp 2</fullName>
    </alternativeName>
</protein>
<accession>Q7NEW1</accession>
<organism>
    <name type="scientific">Gloeobacter violaceus (strain ATCC 29082 / PCC 7421)</name>
    <dbReference type="NCBI Taxonomy" id="251221"/>
    <lineage>
        <taxon>Bacteria</taxon>
        <taxon>Bacillati</taxon>
        <taxon>Cyanobacteriota</taxon>
        <taxon>Cyanophyceae</taxon>
        <taxon>Gloeobacterales</taxon>
        <taxon>Gloeobacteraceae</taxon>
        <taxon>Gloeobacter</taxon>
    </lineage>
</organism>
<gene>
    <name evidence="1" type="primary">clpP2</name>
    <name type="ordered locus">gll3767</name>
</gene>
<sequence>MSELANYGPGAIRAAYSGDYGFRTPPPDLPSLLLNERIVYLGTPINDVVAELLIAQLLYLESEDNAKPIEIYINSPGVAGFETSAFAVYDTMRHVRMPIKTICLGLAGGFSALLMAAGTKGQRMSLPNSRIILYQPYGGARGQATDINIRAQELLTTKRTLNQLLSIHTGKTVEQIDKDTERLFYMSPQEAVSYGLIDKVLEPSANKLAKLKAVGAPV</sequence>
<comment type="function">
    <text evidence="1">Cleaves peptides in various proteins in a process that requires ATP hydrolysis. Has a chymotrypsin-like activity. Plays a major role in the degradation of misfolded proteins.</text>
</comment>
<comment type="catalytic activity">
    <reaction evidence="1">
        <text>Hydrolysis of proteins to small peptides in the presence of ATP and magnesium. alpha-casein is the usual test substrate. In the absence of ATP, only oligopeptides shorter than five residues are hydrolyzed (such as succinyl-Leu-Tyr-|-NHMec, and Leu-Tyr-Leu-|-Tyr-Trp, in which cleavage of the -Tyr-|-Leu- and -Tyr-|-Trp bonds also occurs).</text>
        <dbReference type="EC" id="3.4.21.92"/>
    </reaction>
</comment>
<comment type="subunit">
    <text evidence="1">Fourteen ClpP subunits assemble into 2 heptameric rings which stack back to back to give a disk-like structure with a central cavity, resembling the structure of eukaryotic proteasomes.</text>
</comment>
<comment type="subcellular location">
    <subcellularLocation>
        <location evidence="1">Cytoplasm</location>
    </subcellularLocation>
</comment>
<comment type="similarity">
    <text evidence="1">Belongs to the peptidase S14 family.</text>
</comment>
<reference key="1">
    <citation type="journal article" date="2003" name="DNA Res.">
        <title>Complete genome structure of Gloeobacter violaceus PCC 7421, a cyanobacterium that lacks thylakoids.</title>
        <authorList>
            <person name="Nakamura Y."/>
            <person name="Kaneko T."/>
            <person name="Sato S."/>
            <person name="Mimuro M."/>
            <person name="Miyashita H."/>
            <person name="Tsuchiya T."/>
            <person name="Sasamoto S."/>
            <person name="Watanabe A."/>
            <person name="Kawashima K."/>
            <person name="Kishida Y."/>
            <person name="Kiyokawa C."/>
            <person name="Kohara M."/>
            <person name="Matsumoto M."/>
            <person name="Matsuno A."/>
            <person name="Nakazaki N."/>
            <person name="Shimpo S."/>
            <person name="Takeuchi C."/>
            <person name="Yamada M."/>
            <person name="Tabata S."/>
        </authorList>
    </citation>
    <scope>NUCLEOTIDE SEQUENCE [LARGE SCALE GENOMIC DNA]</scope>
    <source>
        <strain>ATCC 29082 / PCC 7421</strain>
    </source>
</reference>
<keyword id="KW-0963">Cytoplasm</keyword>
<keyword id="KW-0378">Hydrolase</keyword>
<keyword id="KW-0645">Protease</keyword>
<keyword id="KW-1185">Reference proteome</keyword>
<keyword id="KW-0720">Serine protease</keyword>
<dbReference type="EC" id="3.4.21.92" evidence="1"/>
<dbReference type="EMBL" id="BA000045">
    <property type="protein sequence ID" value="BAC91708.1"/>
    <property type="molecule type" value="Genomic_DNA"/>
</dbReference>
<dbReference type="RefSeq" id="NP_926713.1">
    <property type="nucleotide sequence ID" value="NC_005125.1"/>
</dbReference>
<dbReference type="RefSeq" id="WP_011143756.1">
    <property type="nucleotide sequence ID" value="NC_005125.1"/>
</dbReference>
<dbReference type="SMR" id="Q7NEW1"/>
<dbReference type="STRING" id="251221.gene:10761284"/>
<dbReference type="MEROPS" id="S14.001"/>
<dbReference type="EnsemblBacteria" id="BAC91708">
    <property type="protein sequence ID" value="BAC91708"/>
    <property type="gene ID" value="BAC91708"/>
</dbReference>
<dbReference type="KEGG" id="gvi:gll3767"/>
<dbReference type="PATRIC" id="fig|251221.4.peg.3802"/>
<dbReference type="eggNOG" id="COG0740">
    <property type="taxonomic scope" value="Bacteria"/>
</dbReference>
<dbReference type="HOGENOM" id="CLU_058707_5_2_3"/>
<dbReference type="InParanoid" id="Q7NEW1"/>
<dbReference type="OrthoDB" id="510061at2"/>
<dbReference type="PhylomeDB" id="Q7NEW1"/>
<dbReference type="Proteomes" id="UP000000557">
    <property type="component" value="Chromosome"/>
</dbReference>
<dbReference type="GO" id="GO:0005737">
    <property type="term" value="C:cytoplasm"/>
    <property type="evidence" value="ECO:0007669"/>
    <property type="project" value="UniProtKB-SubCell"/>
</dbReference>
<dbReference type="GO" id="GO:0009368">
    <property type="term" value="C:endopeptidase Clp complex"/>
    <property type="evidence" value="ECO:0000318"/>
    <property type="project" value="GO_Central"/>
</dbReference>
<dbReference type="GO" id="GO:0004176">
    <property type="term" value="F:ATP-dependent peptidase activity"/>
    <property type="evidence" value="ECO:0000318"/>
    <property type="project" value="GO_Central"/>
</dbReference>
<dbReference type="GO" id="GO:0051117">
    <property type="term" value="F:ATPase binding"/>
    <property type="evidence" value="ECO:0000318"/>
    <property type="project" value="GO_Central"/>
</dbReference>
<dbReference type="GO" id="GO:0004252">
    <property type="term" value="F:serine-type endopeptidase activity"/>
    <property type="evidence" value="ECO:0000318"/>
    <property type="project" value="GO_Central"/>
</dbReference>
<dbReference type="GO" id="GO:0006515">
    <property type="term" value="P:protein quality control for misfolded or incompletely synthesized proteins"/>
    <property type="evidence" value="ECO:0000318"/>
    <property type="project" value="GO_Central"/>
</dbReference>
<dbReference type="CDD" id="cd07017">
    <property type="entry name" value="S14_ClpP_2"/>
    <property type="match status" value="1"/>
</dbReference>
<dbReference type="FunFam" id="3.90.226.10:FF:000055">
    <property type="entry name" value="ATP-dependent Clp protease proteolytic subunit"/>
    <property type="match status" value="1"/>
</dbReference>
<dbReference type="Gene3D" id="3.90.226.10">
    <property type="entry name" value="2-enoyl-CoA Hydratase, Chain A, domain 1"/>
    <property type="match status" value="1"/>
</dbReference>
<dbReference type="HAMAP" id="MF_00444">
    <property type="entry name" value="ClpP"/>
    <property type="match status" value="1"/>
</dbReference>
<dbReference type="InterPro" id="IPR001907">
    <property type="entry name" value="ClpP"/>
</dbReference>
<dbReference type="InterPro" id="IPR029045">
    <property type="entry name" value="ClpP/crotonase-like_dom_sf"/>
</dbReference>
<dbReference type="InterPro" id="IPR023562">
    <property type="entry name" value="ClpP/TepA"/>
</dbReference>
<dbReference type="NCBIfam" id="NF009204">
    <property type="entry name" value="PRK12552.1"/>
    <property type="match status" value="1"/>
</dbReference>
<dbReference type="PANTHER" id="PTHR10381">
    <property type="entry name" value="ATP-DEPENDENT CLP PROTEASE PROTEOLYTIC SUBUNIT"/>
    <property type="match status" value="1"/>
</dbReference>
<dbReference type="PANTHER" id="PTHR10381:SF72">
    <property type="entry name" value="ATP-DEPENDENT CLP PROTEASE PROTEOLYTIC SUBUNIT-LIKE-RELATED"/>
    <property type="match status" value="1"/>
</dbReference>
<dbReference type="Pfam" id="PF00574">
    <property type="entry name" value="CLP_protease"/>
    <property type="match status" value="1"/>
</dbReference>
<dbReference type="PRINTS" id="PR00127">
    <property type="entry name" value="CLPPROTEASEP"/>
</dbReference>
<dbReference type="SUPFAM" id="SSF52096">
    <property type="entry name" value="ClpP/crotonase"/>
    <property type="match status" value="1"/>
</dbReference>
<name>CLPP2_GLOVI</name>